<feature type="chain" id="PRO_0000092235" description="Transport/processing ATP-binding protein ComA">
    <location>
        <begin position="1"/>
        <end position="717"/>
    </location>
</feature>
<feature type="transmembrane region" description="Helical" evidence="4">
    <location>
        <begin position="18"/>
        <end position="38"/>
    </location>
</feature>
<feature type="transmembrane region" description="Helical" evidence="4">
    <location>
        <begin position="166"/>
        <end position="186"/>
    </location>
</feature>
<feature type="transmembrane region" description="Helical" evidence="4">
    <location>
        <begin position="205"/>
        <end position="225"/>
    </location>
</feature>
<feature type="transmembrane region" description="Helical" evidence="4">
    <location>
        <begin position="237"/>
        <end position="257"/>
    </location>
</feature>
<feature type="transmembrane region" description="Helical" evidence="4">
    <location>
        <begin position="281"/>
        <end position="301"/>
    </location>
</feature>
<feature type="transmembrane region" description="Helical" evidence="4">
    <location>
        <begin position="306"/>
        <end position="326"/>
    </location>
</feature>
<feature type="transmembrane region" description="Helical" evidence="4">
    <location>
        <begin position="397"/>
        <end position="417"/>
    </location>
</feature>
<feature type="domain" description="Peptidase C39" evidence="2">
    <location>
        <begin position="11"/>
        <end position="138"/>
    </location>
</feature>
<feature type="domain" description="ABC transmembrane type-1" evidence="4">
    <location>
        <begin position="168"/>
        <end position="450"/>
    </location>
</feature>
<feature type="domain" description="ABC transporter" evidence="2 3">
    <location>
        <begin position="484"/>
        <end position="717"/>
    </location>
</feature>
<feature type="active site" evidence="2">
    <location>
        <position position="17"/>
    </location>
</feature>
<feature type="binding site" evidence="2 3">
    <location>
        <begin position="517"/>
        <end position="524"/>
    </location>
    <ligand>
        <name>ATP</name>
        <dbReference type="ChEBI" id="CHEBI:30616"/>
    </ligand>
</feature>
<feature type="helix" evidence="6">
    <location>
        <begin position="158"/>
        <end position="163"/>
    </location>
</feature>
<feature type="helix" evidence="6">
    <location>
        <begin position="168"/>
        <end position="194"/>
    </location>
</feature>
<feature type="turn" evidence="6">
    <location>
        <begin position="197"/>
        <end position="200"/>
    </location>
</feature>
<feature type="helix" evidence="6">
    <location>
        <begin position="203"/>
        <end position="249"/>
    </location>
</feature>
<feature type="helix" evidence="6">
    <location>
        <begin position="254"/>
        <end position="259"/>
    </location>
</feature>
<feature type="helix" evidence="6">
    <location>
        <begin position="262"/>
        <end position="275"/>
    </location>
</feature>
<feature type="helix" evidence="6">
    <location>
        <begin position="276"/>
        <end position="280"/>
    </location>
</feature>
<feature type="helix" evidence="6">
    <location>
        <begin position="281"/>
        <end position="287"/>
    </location>
</feature>
<feature type="helix" evidence="6">
    <location>
        <begin position="289"/>
        <end position="303"/>
    </location>
</feature>
<feature type="helix" evidence="6">
    <location>
        <begin position="305"/>
        <end position="311"/>
    </location>
</feature>
<feature type="helix" evidence="6">
    <location>
        <begin position="314"/>
        <end position="324"/>
    </location>
</feature>
<feature type="helix" evidence="6">
    <location>
        <begin position="326"/>
        <end position="352"/>
    </location>
</feature>
<feature type="helix" evidence="6">
    <location>
        <begin position="354"/>
        <end position="360"/>
    </location>
</feature>
<feature type="helix" evidence="6">
    <location>
        <begin position="363"/>
        <end position="415"/>
    </location>
</feature>
<feature type="helix" evidence="6">
    <location>
        <begin position="421"/>
        <end position="458"/>
    </location>
</feature>
<feature type="helix" evidence="6">
    <location>
        <begin position="459"/>
        <end position="463"/>
    </location>
</feature>
<feature type="strand" evidence="6">
    <location>
        <begin position="485"/>
        <end position="491"/>
    </location>
</feature>
<feature type="strand" evidence="6">
    <location>
        <begin position="493"/>
        <end position="496"/>
    </location>
</feature>
<feature type="strand" evidence="6">
    <location>
        <begin position="499"/>
        <end position="503"/>
    </location>
</feature>
<feature type="strand" evidence="6">
    <location>
        <begin position="512"/>
        <end position="516"/>
    </location>
</feature>
<feature type="helix" evidence="6">
    <location>
        <begin position="523"/>
        <end position="530"/>
    </location>
</feature>
<feature type="strand" evidence="6">
    <location>
        <begin position="537"/>
        <end position="543"/>
    </location>
</feature>
<feature type="turn" evidence="6">
    <location>
        <begin position="548"/>
        <end position="550"/>
    </location>
</feature>
<feature type="helix" evidence="6">
    <location>
        <begin position="553"/>
        <end position="558"/>
    </location>
</feature>
<feature type="strand" evidence="6">
    <location>
        <begin position="559"/>
        <end position="562"/>
    </location>
</feature>
<feature type="helix" evidence="6">
    <location>
        <begin position="574"/>
        <end position="579"/>
    </location>
</feature>
<feature type="helix" evidence="6">
    <location>
        <begin position="589"/>
        <end position="597"/>
    </location>
</feature>
<feature type="strand" evidence="6">
    <location>
        <begin position="606"/>
        <end position="608"/>
    </location>
</feature>
<feature type="strand" evidence="7">
    <location>
        <begin position="620"/>
        <end position="622"/>
    </location>
</feature>
<feature type="helix" evidence="6">
    <location>
        <begin position="624"/>
        <end position="637"/>
    </location>
</feature>
<feature type="strand" evidence="6">
    <location>
        <begin position="641"/>
        <end position="647"/>
    </location>
</feature>
<feature type="turn" evidence="6">
    <location>
        <begin position="648"/>
        <end position="651"/>
    </location>
</feature>
<feature type="helix" evidence="6">
    <location>
        <begin position="654"/>
        <end position="665"/>
    </location>
</feature>
<feature type="strand" evidence="6">
    <location>
        <begin position="667"/>
        <end position="674"/>
    </location>
</feature>
<feature type="helix" evidence="6">
    <location>
        <begin position="678"/>
        <end position="682"/>
    </location>
</feature>
<feature type="strand" evidence="6">
    <location>
        <begin position="685"/>
        <end position="699"/>
    </location>
</feature>
<feature type="helix" evidence="6">
    <location>
        <begin position="701"/>
        <end position="705"/>
    </location>
</feature>
<feature type="helix" evidence="6">
    <location>
        <begin position="710"/>
        <end position="716"/>
    </location>
</feature>
<comment type="function">
    <text evidence="1">Required for induction of competence. Seems to transport the competence-stimulating peptide (CSP) (By similarity).</text>
</comment>
<comment type="subcellular location">
    <subcellularLocation>
        <location evidence="1">Cell membrane</location>
        <topology evidence="4">Multi-pass membrane protein</topology>
    </subcellularLocation>
</comment>
<comment type="similarity">
    <text evidence="5">Belongs to the ABC transporter superfamily. HlyB family.</text>
</comment>
<accession>P59653</accession>
<dbReference type="EC" id="3.4.22.-"/>
<dbReference type="EC" id="7.4.2.-"/>
<dbReference type="EMBL" id="AE007317">
    <property type="protein sequence ID" value="AAK98847.1"/>
    <property type="molecule type" value="Genomic_DNA"/>
</dbReference>
<dbReference type="RefSeq" id="NP_357637.1">
    <property type="nucleotide sequence ID" value="NC_003098.1"/>
</dbReference>
<dbReference type="RefSeq" id="WP_000668290.1">
    <property type="nucleotide sequence ID" value="NC_003098.1"/>
</dbReference>
<dbReference type="PDB" id="8HF4">
    <property type="method" value="EM"/>
    <property type="resolution" value="2.80 A"/>
    <property type="chains" value="A/B=1-717"/>
</dbReference>
<dbReference type="PDB" id="8HF5">
    <property type="method" value="EM"/>
    <property type="resolution" value="2.90 A"/>
    <property type="chains" value="A/B=1-717"/>
</dbReference>
<dbReference type="PDB" id="8K7A">
    <property type="method" value="EM"/>
    <property type="resolution" value="4.20 A"/>
    <property type="chains" value="A/B=1-717"/>
</dbReference>
<dbReference type="PDBsum" id="8HF4"/>
<dbReference type="PDBsum" id="8HF5"/>
<dbReference type="PDBsum" id="8K7A"/>
<dbReference type="EMDB" id="EMD-34712"/>
<dbReference type="EMDB" id="EMD-34713"/>
<dbReference type="EMDB" id="EMD-36936"/>
<dbReference type="SMR" id="P59653"/>
<dbReference type="STRING" id="171101.spr0043"/>
<dbReference type="MEROPS" id="C39.001"/>
<dbReference type="KEGG" id="spr:spr0043"/>
<dbReference type="PATRIC" id="fig|171101.6.peg.51"/>
<dbReference type="eggNOG" id="COG2274">
    <property type="taxonomic scope" value="Bacteria"/>
</dbReference>
<dbReference type="HOGENOM" id="CLU_000604_84_3_9"/>
<dbReference type="Proteomes" id="UP000000586">
    <property type="component" value="Chromosome"/>
</dbReference>
<dbReference type="GO" id="GO:0005886">
    <property type="term" value="C:plasma membrane"/>
    <property type="evidence" value="ECO:0007669"/>
    <property type="project" value="UniProtKB-SubCell"/>
</dbReference>
<dbReference type="GO" id="GO:0043214">
    <property type="term" value="F:ABC-type bacteriocin transporter activity"/>
    <property type="evidence" value="ECO:0007669"/>
    <property type="project" value="InterPro"/>
</dbReference>
<dbReference type="GO" id="GO:0005524">
    <property type="term" value="F:ATP binding"/>
    <property type="evidence" value="ECO:0007669"/>
    <property type="project" value="UniProtKB-KW"/>
</dbReference>
<dbReference type="GO" id="GO:0016887">
    <property type="term" value="F:ATP hydrolysis activity"/>
    <property type="evidence" value="ECO:0007669"/>
    <property type="project" value="InterPro"/>
</dbReference>
<dbReference type="GO" id="GO:0034040">
    <property type="term" value="F:ATPase-coupled lipid transmembrane transporter activity"/>
    <property type="evidence" value="ECO:0000318"/>
    <property type="project" value="GO_Central"/>
</dbReference>
<dbReference type="GO" id="GO:0008234">
    <property type="term" value="F:cysteine-type peptidase activity"/>
    <property type="evidence" value="ECO:0007669"/>
    <property type="project" value="UniProtKB-KW"/>
</dbReference>
<dbReference type="GO" id="GO:0030420">
    <property type="term" value="P:establishment of competence for transformation"/>
    <property type="evidence" value="ECO:0007669"/>
    <property type="project" value="UniProtKB-KW"/>
</dbReference>
<dbReference type="GO" id="GO:0006508">
    <property type="term" value="P:proteolysis"/>
    <property type="evidence" value="ECO:0007669"/>
    <property type="project" value="UniProtKB-KW"/>
</dbReference>
<dbReference type="GO" id="GO:0055085">
    <property type="term" value="P:transmembrane transport"/>
    <property type="evidence" value="ECO:0000318"/>
    <property type="project" value="GO_Central"/>
</dbReference>
<dbReference type="CDD" id="cd18570">
    <property type="entry name" value="ABC_6TM_PCAT1_LagD_like"/>
    <property type="match status" value="1"/>
</dbReference>
<dbReference type="CDD" id="cd02418">
    <property type="entry name" value="Peptidase_C39B"/>
    <property type="match status" value="1"/>
</dbReference>
<dbReference type="FunFam" id="3.40.50.300:FF:000299">
    <property type="entry name" value="ABC transporter ATP-binding protein/permease"/>
    <property type="match status" value="1"/>
</dbReference>
<dbReference type="FunFam" id="1.20.1560.10:FF:000138">
    <property type="entry name" value="Competence factor transporting ATP-binding protein/permease ComA"/>
    <property type="match status" value="1"/>
</dbReference>
<dbReference type="FunFam" id="3.90.70.10:FF:000188">
    <property type="entry name" value="Competence factor transporting ATP-binding protein/permease ComA"/>
    <property type="match status" value="1"/>
</dbReference>
<dbReference type="Gene3D" id="1.20.1560.10">
    <property type="entry name" value="ABC transporter type 1, transmembrane domain"/>
    <property type="match status" value="1"/>
</dbReference>
<dbReference type="Gene3D" id="3.90.70.10">
    <property type="entry name" value="Cysteine proteinases"/>
    <property type="match status" value="1"/>
</dbReference>
<dbReference type="Gene3D" id="3.40.50.300">
    <property type="entry name" value="P-loop containing nucleotide triphosphate hydrolases"/>
    <property type="match status" value="1"/>
</dbReference>
<dbReference type="InterPro" id="IPR003593">
    <property type="entry name" value="AAA+_ATPase"/>
</dbReference>
<dbReference type="InterPro" id="IPR011527">
    <property type="entry name" value="ABC1_TM_dom"/>
</dbReference>
<dbReference type="InterPro" id="IPR036640">
    <property type="entry name" value="ABC1_TM_sf"/>
</dbReference>
<dbReference type="InterPro" id="IPR003439">
    <property type="entry name" value="ABC_transporter-like_ATP-bd"/>
</dbReference>
<dbReference type="InterPro" id="IPR017871">
    <property type="entry name" value="ABC_transporter-like_CS"/>
</dbReference>
<dbReference type="InterPro" id="IPR027417">
    <property type="entry name" value="P-loop_NTPase"/>
</dbReference>
<dbReference type="InterPro" id="IPR005897">
    <property type="entry name" value="Pept_C39_ABC_bacteriocin"/>
</dbReference>
<dbReference type="InterPro" id="IPR005074">
    <property type="entry name" value="Peptidase_C39"/>
</dbReference>
<dbReference type="InterPro" id="IPR039421">
    <property type="entry name" value="Type_1_exporter"/>
</dbReference>
<dbReference type="NCBIfam" id="TIGR01193">
    <property type="entry name" value="bacteriocin_ABC"/>
    <property type="match status" value="1"/>
</dbReference>
<dbReference type="PANTHER" id="PTHR43394:SF1">
    <property type="entry name" value="ATP-BINDING CASSETTE SUB-FAMILY B MEMBER 10, MITOCHONDRIAL"/>
    <property type="match status" value="1"/>
</dbReference>
<dbReference type="PANTHER" id="PTHR43394">
    <property type="entry name" value="ATP-DEPENDENT PERMEASE MDL1, MITOCHONDRIAL"/>
    <property type="match status" value="1"/>
</dbReference>
<dbReference type="Pfam" id="PF00664">
    <property type="entry name" value="ABC_membrane"/>
    <property type="match status" value="1"/>
</dbReference>
<dbReference type="Pfam" id="PF00005">
    <property type="entry name" value="ABC_tran"/>
    <property type="match status" value="1"/>
</dbReference>
<dbReference type="Pfam" id="PF03412">
    <property type="entry name" value="Peptidase_C39"/>
    <property type="match status" value="1"/>
</dbReference>
<dbReference type="SMART" id="SM00382">
    <property type="entry name" value="AAA"/>
    <property type="match status" value="1"/>
</dbReference>
<dbReference type="SUPFAM" id="SSF90123">
    <property type="entry name" value="ABC transporter transmembrane region"/>
    <property type="match status" value="1"/>
</dbReference>
<dbReference type="SUPFAM" id="SSF52540">
    <property type="entry name" value="P-loop containing nucleoside triphosphate hydrolases"/>
    <property type="match status" value="1"/>
</dbReference>
<dbReference type="PROSITE" id="PS50929">
    <property type="entry name" value="ABC_TM1F"/>
    <property type="match status" value="1"/>
</dbReference>
<dbReference type="PROSITE" id="PS00211">
    <property type="entry name" value="ABC_TRANSPORTER_1"/>
    <property type="match status" value="1"/>
</dbReference>
<dbReference type="PROSITE" id="PS50893">
    <property type="entry name" value="ABC_TRANSPORTER_2"/>
    <property type="match status" value="1"/>
</dbReference>
<dbReference type="PROSITE" id="PS50990">
    <property type="entry name" value="PEPTIDASE_C39"/>
    <property type="match status" value="1"/>
</dbReference>
<keyword id="KW-0002">3D-structure</keyword>
<keyword id="KW-0067">ATP-binding</keyword>
<keyword id="KW-1003">Cell membrane</keyword>
<keyword id="KW-0178">Competence</keyword>
<keyword id="KW-0378">Hydrolase</keyword>
<keyword id="KW-0472">Membrane</keyword>
<keyword id="KW-0547">Nucleotide-binding</keyword>
<keyword id="KW-0645">Protease</keyword>
<keyword id="KW-1185">Reference proteome</keyword>
<keyword id="KW-0788">Thiol protease</keyword>
<keyword id="KW-1278">Translocase</keyword>
<keyword id="KW-0812">Transmembrane</keyword>
<keyword id="KW-1133">Transmembrane helix</keyword>
<keyword id="KW-0813">Transport</keyword>
<protein>
    <recommendedName>
        <fullName>Transport/processing ATP-binding protein ComA</fullName>
        <ecNumber>3.4.22.-</ecNumber>
        <ecNumber>7.4.2.-</ecNumber>
    </recommendedName>
</protein>
<name>COMA_STRR6</name>
<reference key="1">
    <citation type="journal article" date="2001" name="J. Bacteriol.">
        <title>Genome of the bacterium Streptococcus pneumoniae strain R6.</title>
        <authorList>
            <person name="Hoskins J."/>
            <person name="Alborn W.E. Jr."/>
            <person name="Arnold J."/>
            <person name="Blaszczak L.C."/>
            <person name="Burgett S."/>
            <person name="DeHoff B.S."/>
            <person name="Estrem S.T."/>
            <person name="Fritz L."/>
            <person name="Fu D.-J."/>
            <person name="Fuller W."/>
            <person name="Geringer C."/>
            <person name="Gilmour R."/>
            <person name="Glass J.S."/>
            <person name="Khoja H."/>
            <person name="Kraft A.R."/>
            <person name="Lagace R.E."/>
            <person name="LeBlanc D.J."/>
            <person name="Lee L.N."/>
            <person name="Lefkowitz E.J."/>
            <person name="Lu J."/>
            <person name="Matsushima P."/>
            <person name="McAhren S.M."/>
            <person name="McHenney M."/>
            <person name="McLeaster K."/>
            <person name="Mundy C.W."/>
            <person name="Nicas T.I."/>
            <person name="Norris F.H."/>
            <person name="O'Gara M."/>
            <person name="Peery R.B."/>
            <person name="Robertson G.T."/>
            <person name="Rockey P."/>
            <person name="Sun P.-M."/>
            <person name="Winkler M.E."/>
            <person name="Yang Y."/>
            <person name="Young-Bellido M."/>
            <person name="Zhao G."/>
            <person name="Zook C.A."/>
            <person name="Baltz R.H."/>
            <person name="Jaskunas S.R."/>
            <person name="Rosteck P.R. Jr."/>
            <person name="Skatrud P.L."/>
            <person name="Glass J.I."/>
        </authorList>
    </citation>
    <scope>NUCLEOTIDE SEQUENCE [LARGE SCALE GENOMIC DNA]</scope>
    <source>
        <strain>ATCC BAA-255 / R6</strain>
    </source>
</reference>
<proteinExistence type="evidence at protein level"/>
<evidence type="ECO:0000250" key="1"/>
<evidence type="ECO:0000255" key="2">
    <source>
        <dbReference type="PROSITE-ProRule" id="PRU00362"/>
    </source>
</evidence>
<evidence type="ECO:0000255" key="3">
    <source>
        <dbReference type="PROSITE-ProRule" id="PRU00434"/>
    </source>
</evidence>
<evidence type="ECO:0000255" key="4">
    <source>
        <dbReference type="PROSITE-ProRule" id="PRU00441"/>
    </source>
</evidence>
<evidence type="ECO:0000305" key="5"/>
<evidence type="ECO:0007829" key="6">
    <source>
        <dbReference type="PDB" id="8HF4"/>
    </source>
</evidence>
<evidence type="ECO:0007829" key="7">
    <source>
        <dbReference type="PDB" id="8HF5"/>
    </source>
</evidence>
<sequence>MKFGKRHYRPQVDQMDCGVASLAMVFGYYGSYYFLAHLRELAKTTMDGTTALGLVKVAEEIGFETRAIKADMTLFDLPDLTFPFVAHVLKEGKLLHYYVVTGQDKDSIHIADPDPGVKLTKLPRERFEEEWTGVTLFMAPSPDYKPHKEQKNGLLSFIPILVKQRGLIANIVLATLLVTVINIVGSYYLQSIIDTYVPDQMRSTLGIISIGLVIVYILQQILSYAQEYLLLVLGQRLSIDVILSYIKHVFHLPMSFFATRRTGEIVSRFTDANSIIDALASTILSIFLDVSTVVIISLVLFSQNTNLFFMTLLALPIYTVIIFAFMKPFEKMNRDTMEANAVLSSSIIEDINGIETIKSLTSESQRYQKIDKEFVDYLKKSFTYSRAESQQKALKKVAHLLLNVGILWMGAVLVMDGKMSLGQLITYNTLLVYFTNPLENIINLQTKLQTAQVANNRLNEVYLVASEFEEKKTVEDLSLMKGDMTFKQVHYKYGYGRDVLSDINLTVPQGSKVAFVGISGSGKTTLAKMMVNFYDPSQGEISLGGVNLNQIDKKALRQYINYLPQQPYVFNGTILENLLLGAKEGTTQEDILRAVELAEIREDIERMPLNYQTELTSDGAGISGGQRQRIALARALLTDAPVLILDEATSSLDILTEKRIVDNLIALDKTLIFIAHRLTIAERTEKVVVLDQGKIVEEGKHADLLAQGGFYAHLVNS</sequence>
<organism>
    <name type="scientific">Streptococcus pneumoniae (strain ATCC BAA-255 / R6)</name>
    <dbReference type="NCBI Taxonomy" id="171101"/>
    <lineage>
        <taxon>Bacteria</taxon>
        <taxon>Bacillati</taxon>
        <taxon>Bacillota</taxon>
        <taxon>Bacilli</taxon>
        <taxon>Lactobacillales</taxon>
        <taxon>Streptococcaceae</taxon>
        <taxon>Streptococcus</taxon>
    </lineage>
</organism>
<gene>
    <name type="primary">comA</name>
    <name type="ordered locus">spr0043</name>
</gene>